<evidence type="ECO:0000250" key="1"/>
<evidence type="ECO:0000250" key="2">
    <source>
        <dbReference type="UniProtKB" id="Q94AG2"/>
    </source>
</evidence>
<evidence type="ECO:0000250" key="3">
    <source>
        <dbReference type="UniProtKB" id="Q94F62"/>
    </source>
</evidence>
<evidence type="ECO:0000250" key="4">
    <source>
        <dbReference type="UniProtKB" id="Q9LSI9"/>
    </source>
</evidence>
<evidence type="ECO:0000255" key="5"/>
<evidence type="ECO:0000255" key="6">
    <source>
        <dbReference type="PROSITE-ProRule" id="PRU00159"/>
    </source>
</evidence>
<evidence type="ECO:0000255" key="7">
    <source>
        <dbReference type="PROSITE-ProRule" id="PRU00498"/>
    </source>
</evidence>
<evidence type="ECO:0000255" key="8">
    <source>
        <dbReference type="PROSITE-ProRule" id="PRU10027"/>
    </source>
</evidence>
<evidence type="ECO:0000269" key="9">
    <source>
    </source>
</evidence>
<evidence type="ECO:0000269" key="10">
    <source>
    </source>
</evidence>
<evidence type="ECO:0000269" key="11">
    <source>
    </source>
</evidence>
<evidence type="ECO:0000269" key="12">
    <source>
    </source>
</evidence>
<evidence type="ECO:0000269" key="13">
    <source>
    </source>
</evidence>
<evidence type="ECO:0000269" key="14">
    <source>
    </source>
</evidence>
<evidence type="ECO:0000269" key="15">
    <source>
    </source>
</evidence>
<evidence type="ECO:0000269" key="16">
    <source>
    </source>
</evidence>
<evidence type="ECO:0000269" key="17">
    <source>
    </source>
</evidence>
<evidence type="ECO:0000269" key="18">
    <source>
    </source>
</evidence>
<evidence type="ECO:0000303" key="19">
    <source>
    </source>
</evidence>
<evidence type="ECO:0000305" key="20"/>
<evidence type="ECO:0000305" key="21">
    <source>
    </source>
</evidence>
<evidence type="ECO:0000312" key="22">
    <source>
        <dbReference type="Araport" id="AT1G34210"/>
    </source>
</evidence>
<evidence type="ECO:0000312" key="23">
    <source>
        <dbReference type="EMBL" id="AAD39611.1"/>
    </source>
</evidence>
<evidence type="ECO:0007744" key="24">
    <source>
        <dbReference type="PDB" id="4Z61"/>
    </source>
</evidence>
<evidence type="ECO:0007744" key="25">
    <source>
        <dbReference type="PDB" id="5GQR"/>
    </source>
</evidence>
<evidence type="ECO:0007744" key="26">
    <source>
        <dbReference type="PDB" id="6G3W"/>
    </source>
</evidence>
<evidence type="ECO:0007829" key="27">
    <source>
        <dbReference type="PDB" id="5GQR"/>
    </source>
</evidence>
<evidence type="ECO:0007829" key="28">
    <source>
        <dbReference type="PDB" id="6G3W"/>
    </source>
</evidence>
<sequence>MGRKKFEAFGFVCLISLLLLFNSLWLASSNMEGDALHSLRANLVDPNNVLQSWDPTLVNPCTWFHVTCNNENSVIRVDLGNADLSGQLVPQLGQLKNLQYLELYSNNITGPVPSDLGNLTNLVSLDLYLNSFTGPIPDSLGKLFKLRFLRLNNNSLTGPIPMSLTNIMTLQVLDLSNNRLSGSVPDNGSFSLFTPISFANNLDLCGPVTSRPCPGSPPFSPPPPFIPPPIVPTPGGYSATGAIAGGVAAGAALLFAAPALAFAWWRRRKPQEFFFDVPAEEDPEVHLGQLKRFSLRELQVATDSFSNKNILGRGGFGKVYKGRLADGTLVAVKRLKEERTPGGELQFQTEVEMISMAVHRNLLRLRGFCMTPTERLLVYPYMANGSVASCLRERPPSQLPLAWSIRQQIALGSARGLSYLHDHCDPKIIHRDVKAANILLDEEFEAVVGDFGLARLMDYKDTHVTTAVRGTIGHIAPEYLSTGKSSEKTDVFGYGIMLLELITGQRAFDLARLANDDDVMLLDWVKGLLKEKKLEMLVDPDLQSNYTEAEVEQLIQVALLCTQSSPMERPKMSEVVRMLEGDGLAEKWDEWQKVEVLRQEVELSSHPTSDWILDSTDNLHAMELSGPR</sequence>
<dbReference type="EC" id="2.7.11.1" evidence="6"/>
<dbReference type="EMBL" id="AF384969">
    <property type="protein sequence ID" value="AAK68073.1"/>
    <property type="molecule type" value="mRNA"/>
</dbReference>
<dbReference type="EMBL" id="FJ708645">
    <property type="protein sequence ID" value="ACN59241.1"/>
    <property type="molecule type" value="mRNA"/>
</dbReference>
<dbReference type="EMBL" id="AC007454">
    <property type="protein sequence ID" value="AAD39611.1"/>
    <property type="molecule type" value="Genomic_DNA"/>
</dbReference>
<dbReference type="EMBL" id="CP002684">
    <property type="protein sequence ID" value="AEE31686.1"/>
    <property type="molecule type" value="Genomic_DNA"/>
</dbReference>
<dbReference type="EMBL" id="CP002684">
    <property type="protein sequence ID" value="ANM57997.1"/>
    <property type="molecule type" value="Genomic_DNA"/>
</dbReference>
<dbReference type="EMBL" id="AK229715">
    <property type="protein sequence ID" value="BAF01553.1"/>
    <property type="molecule type" value="mRNA"/>
</dbReference>
<dbReference type="PIR" id="D86466">
    <property type="entry name" value="D86466"/>
</dbReference>
<dbReference type="RefSeq" id="NP_001320467.1">
    <property type="nucleotide sequence ID" value="NM_001333091.1"/>
</dbReference>
<dbReference type="RefSeq" id="NP_174683.1">
    <property type="nucleotide sequence ID" value="NM_103144.5"/>
</dbReference>
<dbReference type="PDB" id="4Z61">
    <property type="method" value="X-ray"/>
    <property type="resolution" value="2.75 A"/>
    <property type="chains" value="C/D=1-216"/>
</dbReference>
<dbReference type="PDB" id="5GQR">
    <property type="method" value="X-ray"/>
    <property type="resolution" value="3.50 A"/>
    <property type="chains" value="K=30-214"/>
</dbReference>
<dbReference type="PDB" id="6G3W">
    <property type="method" value="X-ray"/>
    <property type="resolution" value="2.20 A"/>
    <property type="chains" value="A/C=28-216"/>
</dbReference>
<dbReference type="PDBsum" id="4Z61"/>
<dbReference type="PDBsum" id="5GQR"/>
<dbReference type="PDBsum" id="6G3W"/>
<dbReference type="SMR" id="Q9XIC7"/>
<dbReference type="BioGRID" id="25552">
    <property type="interactions" value="28"/>
</dbReference>
<dbReference type="DIP" id="DIP-61781N"/>
<dbReference type="FunCoup" id="Q9XIC7">
    <property type="interactions" value="34"/>
</dbReference>
<dbReference type="IntAct" id="Q9XIC7">
    <property type="interactions" value="29"/>
</dbReference>
<dbReference type="STRING" id="3702.Q9XIC7"/>
<dbReference type="GlyCosmos" id="Q9XIC7">
    <property type="glycosylation" value="4 sites, No reported glycans"/>
</dbReference>
<dbReference type="GlyGen" id="Q9XIC7">
    <property type="glycosylation" value="5 sites"/>
</dbReference>
<dbReference type="iPTMnet" id="Q9XIC7"/>
<dbReference type="PaxDb" id="3702-AT1G34210.1"/>
<dbReference type="ProteomicsDB" id="234541"/>
<dbReference type="EnsemblPlants" id="AT1G34210.1">
    <property type="protein sequence ID" value="AT1G34210.1"/>
    <property type="gene ID" value="AT1G34210"/>
</dbReference>
<dbReference type="EnsemblPlants" id="AT1G34210.2">
    <property type="protein sequence ID" value="AT1G34210.2"/>
    <property type="gene ID" value="AT1G34210"/>
</dbReference>
<dbReference type="GeneID" id="840320"/>
<dbReference type="Gramene" id="AT1G34210.1">
    <property type="protein sequence ID" value="AT1G34210.1"/>
    <property type="gene ID" value="AT1G34210"/>
</dbReference>
<dbReference type="Gramene" id="AT1G34210.2">
    <property type="protein sequence ID" value="AT1G34210.2"/>
    <property type="gene ID" value="AT1G34210"/>
</dbReference>
<dbReference type="KEGG" id="ath:AT1G34210"/>
<dbReference type="Araport" id="AT1G34210"/>
<dbReference type="TAIR" id="AT1G34210">
    <property type="gene designation" value="SERK2"/>
</dbReference>
<dbReference type="eggNOG" id="ENOG502QQ7B">
    <property type="taxonomic scope" value="Eukaryota"/>
</dbReference>
<dbReference type="HOGENOM" id="CLU_000288_92_7_1"/>
<dbReference type="InParanoid" id="Q9XIC7"/>
<dbReference type="OMA" id="WYRKKHG"/>
<dbReference type="OrthoDB" id="4062651at2759"/>
<dbReference type="PhylomeDB" id="Q9XIC7"/>
<dbReference type="EvolutionaryTrace" id="Q9XIC7"/>
<dbReference type="PRO" id="PR:Q9XIC7"/>
<dbReference type="Proteomes" id="UP000006548">
    <property type="component" value="Chromosome 1"/>
</dbReference>
<dbReference type="ExpressionAtlas" id="Q9XIC7">
    <property type="expression patterns" value="baseline and differential"/>
</dbReference>
<dbReference type="GO" id="GO:0005634">
    <property type="term" value="C:nucleus"/>
    <property type="evidence" value="ECO:0007005"/>
    <property type="project" value="TAIR"/>
</dbReference>
<dbReference type="GO" id="GO:0005886">
    <property type="term" value="C:plasma membrane"/>
    <property type="evidence" value="ECO:0000314"/>
    <property type="project" value="UniProtKB"/>
</dbReference>
<dbReference type="GO" id="GO:0005524">
    <property type="term" value="F:ATP binding"/>
    <property type="evidence" value="ECO:0007669"/>
    <property type="project" value="UniProtKB-KW"/>
</dbReference>
<dbReference type="GO" id="GO:0008289">
    <property type="term" value="F:lipid binding"/>
    <property type="evidence" value="ECO:0007669"/>
    <property type="project" value="UniProtKB-KW"/>
</dbReference>
<dbReference type="GO" id="GO:0106310">
    <property type="term" value="F:protein serine kinase activity"/>
    <property type="evidence" value="ECO:0007669"/>
    <property type="project" value="RHEA"/>
</dbReference>
<dbReference type="GO" id="GO:0004674">
    <property type="term" value="F:protein serine/threonine kinase activity"/>
    <property type="evidence" value="ECO:0007669"/>
    <property type="project" value="UniProtKB-KW"/>
</dbReference>
<dbReference type="GO" id="GO:0033612">
    <property type="term" value="F:receptor serine/threonine kinase binding"/>
    <property type="evidence" value="ECO:0000353"/>
    <property type="project" value="UniProtKB"/>
</dbReference>
<dbReference type="GO" id="GO:0005102">
    <property type="term" value="F:signaling receptor binding"/>
    <property type="evidence" value="ECO:0000353"/>
    <property type="project" value="UniProtKB"/>
</dbReference>
<dbReference type="GO" id="GO:0009742">
    <property type="term" value="P:brassinosteroid mediated signaling pathway"/>
    <property type="evidence" value="ECO:0000315"/>
    <property type="project" value="TAIR"/>
</dbReference>
<dbReference type="GO" id="GO:0009556">
    <property type="term" value="P:microsporogenesis"/>
    <property type="evidence" value="ECO:0000315"/>
    <property type="project" value="TAIR"/>
</dbReference>
<dbReference type="GO" id="GO:0010152">
    <property type="term" value="P:pollen maturation"/>
    <property type="evidence" value="ECO:0000315"/>
    <property type="project" value="TAIR"/>
</dbReference>
<dbReference type="FunFam" id="3.30.200.20:FF:000015">
    <property type="entry name" value="Somatic embryogenesis receptor kinase 1"/>
    <property type="match status" value="1"/>
</dbReference>
<dbReference type="FunFam" id="3.80.10.10:FF:000024">
    <property type="entry name" value="Somatic embryogenesis receptor kinase 1"/>
    <property type="match status" value="1"/>
</dbReference>
<dbReference type="FunFam" id="1.10.510.10:FF:000016">
    <property type="entry name" value="Somatic embryogenesis receptor-like kinase 1"/>
    <property type="match status" value="1"/>
</dbReference>
<dbReference type="Gene3D" id="3.30.200.20">
    <property type="entry name" value="Phosphorylase Kinase, domain 1"/>
    <property type="match status" value="1"/>
</dbReference>
<dbReference type="Gene3D" id="3.80.10.10">
    <property type="entry name" value="Ribonuclease Inhibitor"/>
    <property type="match status" value="1"/>
</dbReference>
<dbReference type="Gene3D" id="1.10.510.10">
    <property type="entry name" value="Transferase(Phosphotransferase) domain 1"/>
    <property type="match status" value="1"/>
</dbReference>
<dbReference type="InterPro" id="IPR011009">
    <property type="entry name" value="Kinase-like_dom_sf"/>
</dbReference>
<dbReference type="InterPro" id="IPR001611">
    <property type="entry name" value="Leu-rich_rpt"/>
</dbReference>
<dbReference type="InterPro" id="IPR032675">
    <property type="entry name" value="LRR_dom_sf"/>
</dbReference>
<dbReference type="InterPro" id="IPR013210">
    <property type="entry name" value="LRR_N_plant-typ"/>
</dbReference>
<dbReference type="InterPro" id="IPR000719">
    <property type="entry name" value="Prot_kinase_dom"/>
</dbReference>
<dbReference type="InterPro" id="IPR017441">
    <property type="entry name" value="Protein_kinase_ATP_BS"/>
</dbReference>
<dbReference type="InterPro" id="IPR001245">
    <property type="entry name" value="Ser-Thr/Tyr_kinase_cat_dom"/>
</dbReference>
<dbReference type="InterPro" id="IPR008271">
    <property type="entry name" value="Ser/Thr_kinase_AS"/>
</dbReference>
<dbReference type="PANTHER" id="PTHR47988">
    <property type="entry name" value="SOMATIC EMBRYOGENESIS RECEPTOR KINASE 1"/>
    <property type="match status" value="1"/>
</dbReference>
<dbReference type="Pfam" id="PF00560">
    <property type="entry name" value="LRR_1"/>
    <property type="match status" value="4"/>
</dbReference>
<dbReference type="Pfam" id="PF08263">
    <property type="entry name" value="LRRNT_2"/>
    <property type="match status" value="1"/>
</dbReference>
<dbReference type="Pfam" id="PF07714">
    <property type="entry name" value="PK_Tyr_Ser-Thr"/>
    <property type="match status" value="1"/>
</dbReference>
<dbReference type="SMART" id="SM00220">
    <property type="entry name" value="S_TKc"/>
    <property type="match status" value="1"/>
</dbReference>
<dbReference type="SUPFAM" id="SSF52058">
    <property type="entry name" value="L domain-like"/>
    <property type="match status" value="1"/>
</dbReference>
<dbReference type="SUPFAM" id="SSF56112">
    <property type="entry name" value="Protein kinase-like (PK-like)"/>
    <property type="match status" value="1"/>
</dbReference>
<dbReference type="PROSITE" id="PS00107">
    <property type="entry name" value="PROTEIN_KINASE_ATP"/>
    <property type="match status" value="1"/>
</dbReference>
<dbReference type="PROSITE" id="PS50011">
    <property type="entry name" value="PROTEIN_KINASE_DOM"/>
    <property type="match status" value="1"/>
</dbReference>
<dbReference type="PROSITE" id="PS00108">
    <property type="entry name" value="PROTEIN_KINASE_ST"/>
    <property type="match status" value="1"/>
</dbReference>
<organism>
    <name type="scientific">Arabidopsis thaliana</name>
    <name type="common">Mouse-ear cress</name>
    <dbReference type="NCBI Taxonomy" id="3702"/>
    <lineage>
        <taxon>Eukaryota</taxon>
        <taxon>Viridiplantae</taxon>
        <taxon>Streptophyta</taxon>
        <taxon>Embryophyta</taxon>
        <taxon>Tracheophyta</taxon>
        <taxon>Spermatophyta</taxon>
        <taxon>Magnoliopsida</taxon>
        <taxon>eudicotyledons</taxon>
        <taxon>Gunneridae</taxon>
        <taxon>Pentapetalae</taxon>
        <taxon>rosids</taxon>
        <taxon>malvids</taxon>
        <taxon>Brassicales</taxon>
        <taxon>Brassicaceae</taxon>
        <taxon>Camelineae</taxon>
        <taxon>Arabidopsis</taxon>
    </lineage>
</organism>
<gene>
    <name evidence="19" type="primary">SERK2</name>
    <name evidence="22" type="ordered locus">At1g34210</name>
    <name evidence="23" type="ORF">F23M19.11</name>
</gene>
<comment type="function">
    <text evidence="11 14 21">Serine/threonine-kinase involved in brassinosteroid-dependent and -independent signaling pathways. Acts redundantly with SERK1 as a control point for sporophytic development controlling male gametophyte production (PubMed:18667726). Serves as coreceptor to small peptide (e.g. RGF1 and CLE44) signaling (Probable). Involved in the perception of phytosulfokine and subsequent signal transduction (PubMed:26308901).</text>
</comment>
<comment type="catalytic activity">
    <reaction evidence="6">
        <text>L-seryl-[protein] + ATP = O-phospho-L-seryl-[protein] + ADP + H(+)</text>
        <dbReference type="Rhea" id="RHEA:17989"/>
        <dbReference type="Rhea" id="RHEA-COMP:9863"/>
        <dbReference type="Rhea" id="RHEA-COMP:11604"/>
        <dbReference type="ChEBI" id="CHEBI:15378"/>
        <dbReference type="ChEBI" id="CHEBI:29999"/>
        <dbReference type="ChEBI" id="CHEBI:30616"/>
        <dbReference type="ChEBI" id="CHEBI:83421"/>
        <dbReference type="ChEBI" id="CHEBI:456216"/>
        <dbReference type="EC" id="2.7.11.1"/>
    </reaction>
</comment>
<comment type="catalytic activity">
    <reaction evidence="6">
        <text>L-threonyl-[protein] + ATP = O-phospho-L-threonyl-[protein] + ADP + H(+)</text>
        <dbReference type="Rhea" id="RHEA:46608"/>
        <dbReference type="Rhea" id="RHEA-COMP:11060"/>
        <dbReference type="Rhea" id="RHEA-COMP:11605"/>
        <dbReference type="ChEBI" id="CHEBI:15378"/>
        <dbReference type="ChEBI" id="CHEBI:30013"/>
        <dbReference type="ChEBI" id="CHEBI:30616"/>
        <dbReference type="ChEBI" id="CHEBI:61977"/>
        <dbReference type="ChEBI" id="CHEBI:456216"/>
        <dbReference type="EC" id="2.7.11.1"/>
    </reaction>
</comment>
<comment type="subunit">
    <text evidence="1 2 9 13 14 15 16 17">Homo- and heterodimer. Component of the SERK1 signaling complex, composed of KAPP, CDC48A, GRF6 or GRF7, SERK1, SERK2, SERK3/BAK1 and BRI1 (By similarity). Bind to BRI1 in a brassinolide-dependent manner (By similarity). Heterodimer with PSKR1 (PubMed:26308901). Interacts with the EF-Tu receptor EFR and FLS2 in a specific ligand-induced manner. Interacts with ERECTA in a EPF2-induced manner. Interacts with ERL1 in a EPF1-induced manner. Interacts with TMM (PubMed:26320950). In the presence of the signal peptide RGF1, interacts with RGI3/RGFR1 and RGI4/RGFR2/SKM2 (PubMed:27229311). Binds to the peptide CLE44 in the presence of TDR (PubMed:27449136).</text>
</comment>
<comment type="interaction">
    <interactant intactId="EBI-6299033">
        <id>Q9XIC7</id>
    </interactant>
    <interactant intactId="EBI-17126713">
        <id>C0LGE4</id>
        <label>At1g12460</label>
    </interactant>
    <organismsDiffer>false</organismsDiffer>
    <experiments>4</experiments>
</comment>
<comment type="interaction">
    <interactant intactId="EBI-6299033">
        <id>Q9XIC7</id>
    </interactant>
    <interactant intactId="EBI-16945916">
        <id>Q0WR59</id>
        <label>At5g10020</label>
    </interactant>
    <organismsDiffer>false</organismsDiffer>
    <experiments>3</experiments>
</comment>
<comment type="interaction">
    <interactant intactId="EBI-6299033">
        <id>Q9XIC7</id>
    </interactant>
    <interactant intactId="EBI-20653342">
        <id>A0A178UFM8</id>
        <label>At5g51560</label>
    </interactant>
    <organismsDiffer>false</organismsDiffer>
    <experiments>2</experiments>
</comment>
<comment type="interaction">
    <interactant intactId="EBI-6299033">
        <id>Q9XIC7</id>
    </interactant>
    <interactant intactId="EBI-20651518">
        <id>C0LGN7</id>
        <label>LRR-RLK</label>
    </interactant>
    <organismsDiffer>false</organismsDiffer>
    <experiments>3</experiments>
</comment>
<comment type="interaction">
    <interactant intactId="EBI-6299033">
        <id>Q9XIC7</id>
    </interactant>
    <interactant intactId="EBI-17071528">
        <id>Q9FRI1</id>
        <label>LRR-RLK</label>
    </interactant>
    <organismsDiffer>false</organismsDiffer>
    <experiments>4</experiments>
</comment>
<comment type="interaction">
    <interactant intactId="EBI-6299033">
        <id>Q9XIC7</id>
    </interactant>
    <interactant intactId="EBI-17121474">
        <id>Q93ZS4</id>
        <label>NIK3</label>
    </interactant>
    <organismsDiffer>false</organismsDiffer>
    <experiments>4</experiments>
</comment>
<comment type="interaction">
    <interactant intactId="EBI-6299033">
        <id>Q9XIC7</id>
    </interactant>
    <interactant intactId="EBI-16172949">
        <id>Q9ZVR7</id>
        <label>PSKR1</label>
    </interactant>
    <organismsDiffer>false</organismsDiffer>
    <experiments>5</experiments>
</comment>
<comment type="interaction">
    <interactant intactId="EBI-6299033">
        <id>Q9XIC7</id>
    </interactant>
    <interactant intactId="EBI-1238200">
        <id>Q9LZV7</id>
        <label>PXC2</label>
    </interactant>
    <organismsDiffer>false</organismsDiffer>
    <experiments>2</experiments>
</comment>
<comment type="interaction">
    <interactant intactId="EBI-6299033">
        <id>Q9XIC7</id>
    </interactant>
    <interactant intactId="EBI-2023970">
        <id>P43298</id>
        <label>TMK1</label>
    </interactant>
    <organismsDiffer>false</organismsDiffer>
    <experiments>3</experiments>
</comment>
<comment type="interaction">
    <interactant intactId="EBI-6299033">
        <id>Q9XIC7</id>
    </interactant>
    <interactant intactId="EBI-16172869">
        <id>Q8LPB4</id>
        <label>PSKR</label>
    </interactant>
    <organismsDiffer>true</organismsDiffer>
    <experiments>4</experiments>
</comment>
<comment type="subcellular location">
    <subcellularLocation>
        <location evidence="9">Cell membrane</location>
        <topology evidence="9">Single-pass type I membrane protein</topology>
    </subcellularLocation>
</comment>
<comment type="tissue specificity">
    <text evidence="9">Expressed in flowers, tapetum, developing microspores, all cells of the embryo sac, provascular strands and developing vascular bundles. Low expression in adult vascular tissue.</text>
</comment>
<comment type="PTM">
    <text evidence="12">Autophosphorylated.</text>
</comment>
<comment type="disruption phenotype">
    <text evidence="9 10">No visible phenotype. Serk1 and serk2 double mutants are completely male sterile due to a failure in tapetum specification.</text>
</comment>
<comment type="similarity">
    <text evidence="6">Belongs to the protein kinase superfamily. Ser/Thr protein kinase family.</text>
</comment>
<proteinExistence type="evidence at protein level"/>
<reference key="1">
    <citation type="journal article" date="2001" name="Plant Physiol.">
        <title>The Arabidopsis SOMATIC EMBRYOGENESIS RECEPTOR KINASE 1 gene is expressed in developing ovules and embryos and enhances embryogenic competence in culture.</title>
        <authorList>
            <person name="Hecht V.F.G."/>
            <person name="Vielle-Calzada J.-P."/>
            <person name="Hartog M.V."/>
            <person name="Schmidt E.D.L."/>
            <person name="Boutilier K."/>
            <person name="Grossniklaus U."/>
            <person name="de Vries S.C."/>
        </authorList>
    </citation>
    <scope>NUCLEOTIDE SEQUENCE [MRNA]</scope>
</reference>
<reference key="2">
    <citation type="journal article" date="2001" name="Planta">
        <title>Molecular characterisation of two novel maize LRR receptor-like kinases, which belong to the SERK gene family.</title>
        <authorList>
            <person name="Baudino S."/>
            <person name="Hansen S."/>
            <person name="Brettschneider R."/>
            <person name="Hecht V.F.G."/>
            <person name="Dresselhaus T."/>
            <person name="Loerz H."/>
            <person name="Dumas C."/>
            <person name="Rogowsky P.M."/>
        </authorList>
    </citation>
    <scope>NUCLEOTIDE SEQUENCE [MRNA]</scope>
</reference>
<reference key="3">
    <citation type="journal article" date="2005" name="Plant Cell">
        <title>The Arabidopsis thaliana SOMATIC EMBRYOGENESIS RECEPTOR-LIKE KINASES1 and 2 control male sporogenesis.</title>
        <authorList>
            <person name="Albrecht C."/>
            <person name="Russinova E."/>
            <person name="Hecht V.F.G."/>
            <person name="Baaijens E."/>
            <person name="de Vries S."/>
        </authorList>
    </citation>
    <scope>NUCLEOTIDE SEQUENCE [MRNA]</scope>
    <scope>SUBUNIT</scope>
    <scope>INTERACTION WITH SERK1</scope>
    <scope>TISSUE SPECIFICITY</scope>
    <scope>SUBCELLULAR LOCATION</scope>
    <scope>DISRUPTION PHENOTYPE</scope>
</reference>
<reference key="4">
    <citation type="journal article" date="2010" name="BMC Genomics">
        <title>Genome-wide cloning and sequence analysis of leucine-rich repeat receptor-like protein kinase genes in Arabidopsis thaliana.</title>
        <authorList>
            <person name="Gou X."/>
            <person name="He K."/>
            <person name="Yang H."/>
            <person name="Yuan T."/>
            <person name="Lin H."/>
            <person name="Clouse S.D."/>
            <person name="Li J."/>
        </authorList>
    </citation>
    <scope>NUCLEOTIDE SEQUENCE [MRNA]</scope>
    <source>
        <strain>cv. Columbia</strain>
    </source>
</reference>
<reference key="5">
    <citation type="journal article" date="2000" name="Nature">
        <title>Sequence and analysis of chromosome 1 of the plant Arabidopsis thaliana.</title>
        <authorList>
            <person name="Theologis A."/>
            <person name="Ecker J.R."/>
            <person name="Palm C.J."/>
            <person name="Federspiel N.A."/>
            <person name="Kaul S."/>
            <person name="White O."/>
            <person name="Alonso J."/>
            <person name="Altafi H."/>
            <person name="Araujo R."/>
            <person name="Bowman C.L."/>
            <person name="Brooks S.Y."/>
            <person name="Buehler E."/>
            <person name="Chan A."/>
            <person name="Chao Q."/>
            <person name="Chen H."/>
            <person name="Cheuk R.F."/>
            <person name="Chin C.W."/>
            <person name="Chung M.K."/>
            <person name="Conn L."/>
            <person name="Conway A.B."/>
            <person name="Conway A.R."/>
            <person name="Creasy T.H."/>
            <person name="Dewar K."/>
            <person name="Dunn P."/>
            <person name="Etgu P."/>
            <person name="Feldblyum T.V."/>
            <person name="Feng J.-D."/>
            <person name="Fong B."/>
            <person name="Fujii C.Y."/>
            <person name="Gill J.E."/>
            <person name="Goldsmith A.D."/>
            <person name="Haas B."/>
            <person name="Hansen N.F."/>
            <person name="Hughes B."/>
            <person name="Huizar L."/>
            <person name="Hunter J.L."/>
            <person name="Jenkins J."/>
            <person name="Johnson-Hopson C."/>
            <person name="Khan S."/>
            <person name="Khaykin E."/>
            <person name="Kim C.J."/>
            <person name="Koo H.L."/>
            <person name="Kremenetskaia I."/>
            <person name="Kurtz D.B."/>
            <person name="Kwan A."/>
            <person name="Lam B."/>
            <person name="Langin-Hooper S."/>
            <person name="Lee A."/>
            <person name="Lee J.M."/>
            <person name="Lenz C.A."/>
            <person name="Li J.H."/>
            <person name="Li Y.-P."/>
            <person name="Lin X."/>
            <person name="Liu S.X."/>
            <person name="Liu Z.A."/>
            <person name="Luros J.S."/>
            <person name="Maiti R."/>
            <person name="Marziali A."/>
            <person name="Militscher J."/>
            <person name="Miranda M."/>
            <person name="Nguyen M."/>
            <person name="Nierman W.C."/>
            <person name="Osborne B.I."/>
            <person name="Pai G."/>
            <person name="Peterson J."/>
            <person name="Pham P.K."/>
            <person name="Rizzo M."/>
            <person name="Rooney T."/>
            <person name="Rowley D."/>
            <person name="Sakano H."/>
            <person name="Salzberg S.L."/>
            <person name="Schwartz J.R."/>
            <person name="Shinn P."/>
            <person name="Southwick A.M."/>
            <person name="Sun H."/>
            <person name="Tallon L.J."/>
            <person name="Tambunga G."/>
            <person name="Toriumi M.J."/>
            <person name="Town C.D."/>
            <person name="Utterback T."/>
            <person name="Van Aken S."/>
            <person name="Vaysberg M."/>
            <person name="Vysotskaia V.S."/>
            <person name="Walker M."/>
            <person name="Wu D."/>
            <person name="Yu G."/>
            <person name="Fraser C.M."/>
            <person name="Venter J.C."/>
            <person name="Davis R.W."/>
        </authorList>
    </citation>
    <scope>NUCLEOTIDE SEQUENCE [LARGE SCALE GENOMIC DNA]</scope>
    <source>
        <strain>cv. Columbia</strain>
    </source>
</reference>
<reference key="6">
    <citation type="journal article" date="2017" name="Plant J.">
        <title>Araport11: a complete reannotation of the Arabidopsis thaliana reference genome.</title>
        <authorList>
            <person name="Cheng C.Y."/>
            <person name="Krishnakumar V."/>
            <person name="Chan A.P."/>
            <person name="Thibaud-Nissen F."/>
            <person name="Schobel S."/>
            <person name="Town C.D."/>
        </authorList>
    </citation>
    <scope>GENOME REANNOTATION</scope>
    <source>
        <strain>cv. Columbia</strain>
    </source>
</reference>
<reference key="7">
    <citation type="submission" date="2006-07" db="EMBL/GenBank/DDBJ databases">
        <title>Large-scale analysis of RIKEN Arabidopsis full-length (RAFL) cDNAs.</title>
        <authorList>
            <person name="Totoki Y."/>
            <person name="Seki M."/>
            <person name="Ishida J."/>
            <person name="Nakajima M."/>
            <person name="Enju A."/>
            <person name="Kamiya A."/>
            <person name="Narusaka M."/>
            <person name="Shin-i T."/>
            <person name="Nakagawa M."/>
            <person name="Sakamoto N."/>
            <person name="Oishi K."/>
            <person name="Kohara Y."/>
            <person name="Kobayashi M."/>
            <person name="Toyoda A."/>
            <person name="Sakaki Y."/>
            <person name="Sakurai T."/>
            <person name="Iida K."/>
            <person name="Akiyama K."/>
            <person name="Satou M."/>
            <person name="Toyoda T."/>
            <person name="Konagaya A."/>
            <person name="Carninci P."/>
            <person name="Kawai J."/>
            <person name="Hayashizaki Y."/>
            <person name="Shinozaki K."/>
        </authorList>
    </citation>
    <scope>NUCLEOTIDE SEQUENCE [LARGE SCALE MRNA]</scope>
    <source>
        <strain>cv. Columbia</strain>
    </source>
</reference>
<reference key="8">
    <citation type="journal article" date="2005" name="Plant Cell">
        <title>Arabidopsis SOMATIC EMBRYOGENESIS RECEPTOR KINASES1 and 2 are essential for tapetum development and microspore maturation.</title>
        <authorList>
            <person name="Colcombet J."/>
            <person name="Boisson-Dernier A."/>
            <person name="Ros-Palau R."/>
            <person name="Vera C.E."/>
            <person name="Schroeder J.I."/>
        </authorList>
    </citation>
    <scope>DISRUPTION PHENOTYPE</scope>
</reference>
<reference key="9">
    <citation type="journal article" date="2008" name="Plant Physiol.">
        <title>Arabidopsis SOMATIC EMBRYOGENESIS RECEPTOR KINASE proteins serve brassinosteroid-dependent and -independent signaling pathways.</title>
        <authorList>
            <person name="Albrecht C."/>
            <person name="Russinova E."/>
            <person name="Kemmerling B."/>
            <person name="Kwaaitaal M."/>
            <person name="de Vries S.C."/>
        </authorList>
    </citation>
    <scope>FUNCTION</scope>
</reference>
<reference key="10">
    <citation type="journal article" date="2009" name="Proteomics">
        <title>Identification of in vitro phosphorylation sites in the Arabidopsis thaliana somatic embryogenesis receptor-like kinases.</title>
        <authorList>
            <person name="Karlova R."/>
            <person name="Boeren S."/>
            <person name="van Dongen W."/>
            <person name="Kwaaitaal M."/>
            <person name="Aker J."/>
            <person name="Vervoort J."/>
            <person name="de Vries S.C."/>
        </authorList>
    </citation>
    <scope>AUTOPHOSPHORYLATION</scope>
    <scope>PHOSPHORYLATION AT THR-302; THR-462; THR-465; THR-466; SER-604; THR-616 AND SER-625</scope>
</reference>
<reference key="11">
    <citation type="journal article" date="2011" name="Plant Cell">
        <title>The Arabidopsis leucine-rich repeat receptor-like kinases BAK1/SERK3 and BKK1/SERK4 are required for innate immunity to hemibiotrophic and biotrophic pathogens.</title>
        <authorList>
            <person name="Roux M."/>
            <person name="Schwessinger B."/>
            <person name="Albrecht C."/>
            <person name="Chinchilla D."/>
            <person name="Jones A."/>
            <person name="Holton N."/>
            <person name="Malinovsky F.G."/>
            <person name="Tor M."/>
            <person name="de Vries S."/>
            <person name="Zipfel C."/>
        </authorList>
    </citation>
    <scope>INTERACTION WITH EFR AND FLS2</scope>
    <source>
        <strain>cv. Columbia</strain>
    </source>
</reference>
<reference key="12">
    <citation type="journal article" date="2015" name="Curr. Biol.">
        <title>Differential function of Arabidopsis SERK family receptor-like kinases in stomatal patterning.</title>
        <authorList>
            <person name="Meng X."/>
            <person name="Chen X."/>
            <person name="Mang H."/>
            <person name="Liu C."/>
            <person name="Yu X."/>
            <person name="Gao X."/>
            <person name="Torii K.U."/>
            <person name="He P."/>
            <person name="Shan L."/>
        </authorList>
    </citation>
    <scope>INTERACTION WITH ERECTA; ERL1 AND TMM</scope>
</reference>
<reference key="13">
    <citation type="journal article" date="2016" name="Cell Res.">
        <title>Signature motif-guided identification of receptors for peptide hormones essential for root meristem growth.</title>
        <authorList>
            <person name="Song W."/>
            <person name="Liu L."/>
            <person name="Wang J."/>
            <person name="Wu Z."/>
            <person name="Zhang H."/>
            <person name="Tang J."/>
            <person name="Lin G."/>
            <person name="Wang Y."/>
            <person name="Wen X."/>
            <person name="Li W."/>
            <person name="Han Z."/>
            <person name="Guo H."/>
            <person name="Chai J."/>
        </authorList>
    </citation>
    <scope>FUNCTION</scope>
    <scope>INTERACTION WITH RGI3/RGFR1 AND RGI4/RGFR2/SKM2</scope>
    <source>
        <strain>cv. Columbia</strain>
    </source>
</reference>
<reference key="14">
    <citation type="journal article" date="2015" name="Nature">
        <title>Allosteric receptor activation by the plant peptide hormone phytosulfokine.</title>
        <authorList>
            <person name="Wang J."/>
            <person name="Li H."/>
            <person name="Han Z."/>
            <person name="Zhang H."/>
            <person name="Wang T."/>
            <person name="Lin G."/>
            <person name="Chang J."/>
            <person name="Yang W."/>
            <person name="Chai J."/>
        </authorList>
    </citation>
    <scope>X-RAY CRYSTALLOGRAPHY (2.75 ANGSTROMS) OF 1-216</scope>
    <scope>FUNCTION</scope>
    <scope>GLYCOSYLATION AT ASN-153 AND ASN-187</scope>
    <scope>DISULFIDE BONDS</scope>
    <scope>INTERACTION WITH PSKR1</scope>
</reference>
<reference key="15">
    <citation type="journal article" date="2016" name="Mol. Plant">
        <title>SERK family receptor-like kinases function as co-receptors with PXY for plant vascular development.</title>
        <authorList>
            <person name="Zhang H."/>
            <person name="Lin X."/>
            <person name="Han Z."/>
            <person name="Wang J."/>
            <person name="Qu L.-J."/>
            <person name="Chai J."/>
        </authorList>
    </citation>
    <scope>X-RAY CRYSTALLOGRAPHY (3.50 ANGSTROMS) OF 30-214 IN COMPLEX WITH CLE44 AND TDR</scope>
    <scope>FUNCTION</scope>
    <scope>GLYCOSYLATION AT ASN-153 AND ASN-187</scope>
    <scope>DISULFIDE BONDS</scope>
</reference>
<reference key="16">
    <citation type="journal article" date="2018" name="Nat. Plants">
        <title>The SERK3 elongated allele defines a role for BIR ectodomains in brassinosteroid signalling.</title>
        <authorList>
            <person name="Hohmann U."/>
            <person name="Nicolet J."/>
            <person name="Moretti A."/>
            <person name="Hothorn L.A."/>
            <person name="Hothorn M."/>
        </authorList>
    </citation>
    <scope>X-RAY CRYSTALLOGRAPHY (2.20 ANGSTROMS) OF 28-216</scope>
    <scope>DISULFIDE BONDS</scope>
</reference>
<accession>Q9XIC7</accession>
<accession>Q94F63</accession>
<feature type="signal peptide" evidence="5">
    <location>
        <begin position="1"/>
        <end position="29"/>
    </location>
</feature>
<feature type="chain" id="PRO_0000380725" description="Somatic embryogenesis receptor kinase 2">
    <location>
        <begin position="30"/>
        <end position="628"/>
    </location>
</feature>
<feature type="topological domain" description="Extracellular" evidence="5">
    <location>
        <begin position="30"/>
        <end position="241"/>
    </location>
</feature>
<feature type="transmembrane region" description="Helical" evidence="5">
    <location>
        <begin position="242"/>
        <end position="262"/>
    </location>
</feature>
<feature type="topological domain" description="Cytoplasmic" evidence="5">
    <location>
        <begin position="263"/>
        <end position="628"/>
    </location>
</feature>
<feature type="repeat" description="LRR 1" evidence="5">
    <location>
        <begin position="95"/>
        <end position="119"/>
    </location>
</feature>
<feature type="repeat" description="LRR 2" evidence="5">
    <location>
        <begin position="121"/>
        <end position="143"/>
    </location>
</feature>
<feature type="repeat" description="LRR 3" evidence="5">
    <location>
        <begin position="144"/>
        <end position="167"/>
    </location>
</feature>
<feature type="repeat" description="LRR 4" evidence="5">
    <location>
        <begin position="168"/>
        <end position="192"/>
    </location>
</feature>
<feature type="domain" description="Protein kinase" evidence="6">
    <location>
        <begin position="305"/>
        <end position="592"/>
    </location>
</feature>
<feature type="region of interest" description="PSKR1 binding" evidence="14 24">
    <location>
        <begin position="45"/>
        <end position="85"/>
    </location>
</feature>
<feature type="region of interest" description="CLE44 binding" evidence="17 25">
    <location>
        <begin position="56"/>
        <end position="58"/>
    </location>
</feature>
<feature type="region of interest" description="Leucine-rich repeat receptor-like protein kinase binding" evidence="17 18 25 26">
    <location>
        <begin position="62"/>
        <end position="81"/>
    </location>
</feature>
<feature type="region of interest" description="Leucine-rich repeat receptor-like protein kinase binding" evidence="17 18 25 26">
    <location>
        <begin position="100"/>
        <end position="105"/>
    </location>
</feature>
<feature type="region of interest" description="Leucine-rich repeat receptor-like protein kinase binding" evidence="17 18 25 26">
    <location>
        <begin position="126"/>
        <end position="129"/>
    </location>
</feature>
<feature type="region of interest" description="Leucine-rich repeat receptor-like protein kinase binding" evidence="17 18 25 26">
    <location>
        <begin position="148"/>
        <end position="150"/>
    </location>
</feature>
<feature type="region of interest" description="Leucine-rich repeat receptor-like protein kinase binding" evidence="18 26">
    <location>
        <begin position="174"/>
        <end position="197"/>
    </location>
</feature>
<feature type="active site" description="Proton acceptor" evidence="6 8">
    <location>
        <position position="432"/>
    </location>
</feature>
<feature type="binding site" evidence="2">
    <location>
        <begin position="64"/>
        <end position="65"/>
    </location>
    <ligand>
        <name>brassinolide</name>
        <dbReference type="ChEBI" id="CHEBI:28277"/>
    </ligand>
</feature>
<feature type="binding site" evidence="6">
    <location>
        <begin position="311"/>
        <end position="319"/>
    </location>
    <ligand>
        <name>ATP</name>
        <dbReference type="ChEBI" id="CHEBI:30616"/>
    </ligand>
</feature>
<feature type="binding site" evidence="6">
    <location>
        <position position="333"/>
    </location>
    <ligand>
        <name>ATP</name>
        <dbReference type="ChEBI" id="CHEBI:30616"/>
    </ligand>
</feature>
<feature type="modified residue" description="Phosphothreonine" evidence="12">
    <location>
        <position position="302"/>
    </location>
</feature>
<feature type="modified residue" description="Phosphothreonine" evidence="3">
    <location>
        <position position="328"/>
    </location>
</feature>
<feature type="modified residue" description="Phosphoserine" evidence="2">
    <location>
        <position position="386"/>
    </location>
</feature>
<feature type="modified residue" description="Phosphoserine" evidence="4">
    <location>
        <position position="389"/>
    </location>
</feature>
<feature type="modified residue" description="Phosphothreonine" evidence="12">
    <location>
        <position position="462"/>
    </location>
</feature>
<feature type="modified residue" description="Phosphothreonine" evidence="12">
    <location>
        <position position="465"/>
    </location>
</feature>
<feature type="modified residue" description="Phosphothreonine" evidence="12">
    <location>
        <position position="466"/>
    </location>
</feature>
<feature type="modified residue" description="Phosphothreonine" evidence="3">
    <location>
        <position position="471"/>
    </location>
</feature>
<feature type="modified residue" description="Phosphotyrosine" evidence="2">
    <location>
        <position position="479"/>
    </location>
</feature>
<feature type="modified residue" description="Phosphoserine" evidence="2">
    <location>
        <position position="481"/>
    </location>
</feature>
<feature type="modified residue" description="Phosphothreonine" evidence="2">
    <location>
        <position position="482"/>
    </location>
</feature>
<feature type="modified residue" description="Phosphoserine" evidence="2">
    <location>
        <position position="486"/>
    </location>
</feature>
<feature type="modified residue" description="Phosphothreonine" evidence="2">
    <location>
        <position position="562"/>
    </location>
</feature>
<feature type="modified residue" description="Phosphoserine" evidence="12">
    <location>
        <position position="604"/>
    </location>
</feature>
<feature type="modified residue" description="Phosphothreonine" evidence="12">
    <location>
        <position position="616"/>
    </location>
</feature>
<feature type="modified residue" description="Phosphoserine" evidence="12">
    <location>
        <position position="625"/>
    </location>
</feature>
<feature type="glycosylation site" description="N-linked (GlcNAc...) asparagine" evidence="7">
    <location>
        <position position="107"/>
    </location>
</feature>
<feature type="glycosylation site" description="N-linked (GlcNAc...) asparagine" evidence="7">
    <location>
        <position position="118"/>
    </location>
</feature>
<feature type="glycosylation site" description="N-linked (GlcNAc...) asparagine" evidence="7 14 17 24 25">
    <location>
        <position position="153"/>
    </location>
</feature>
<feature type="glycosylation site" description="N-linked (GlcNAc...) asparagine" evidence="7 14 17 24 25">
    <location>
        <position position="187"/>
    </location>
</feature>
<feature type="disulfide bond" evidence="14 17 18 24 25 26">
    <location>
        <begin position="61"/>
        <end position="68"/>
    </location>
</feature>
<feature type="disulfide bond" evidence="14 17 18 24 25 26">
    <location>
        <begin position="205"/>
        <end position="213"/>
    </location>
</feature>
<feature type="sequence conflict" description="In Ref. 1, 2 and 3; AAK68073." evidence="20" ref="1 2 3">
    <original>N</original>
    <variation>Y</variation>
    <location>
        <position position="47"/>
    </location>
</feature>
<feature type="sequence conflict" description="In Ref. 1, 2 and 3; AAK68073." evidence="20" ref="1 2 3">
    <original>M</original>
    <variation>T</variation>
    <location>
        <position position="168"/>
    </location>
</feature>
<feature type="sequence conflict" description="In Ref. 1, 2 and 3; AAK68073." evidence="20" ref="1 2 3">
    <original>S</original>
    <variation>G</variation>
    <location>
        <position position="544"/>
    </location>
</feature>
<feature type="helix" evidence="28">
    <location>
        <begin position="31"/>
        <end position="42"/>
    </location>
</feature>
<feature type="turn" evidence="28">
    <location>
        <begin position="49"/>
        <end position="52"/>
    </location>
</feature>
<feature type="strand" evidence="28">
    <location>
        <begin position="57"/>
        <end position="60"/>
    </location>
</feature>
<feature type="strand" evidence="28">
    <location>
        <begin position="66"/>
        <end position="68"/>
    </location>
</feature>
<feature type="strand" evidence="27">
    <location>
        <begin position="70"/>
        <end position="72"/>
    </location>
</feature>
<feature type="strand" evidence="28">
    <location>
        <begin position="74"/>
        <end position="78"/>
    </location>
</feature>
<feature type="strand" evidence="28">
    <location>
        <begin position="85"/>
        <end position="87"/>
    </location>
</feature>
<feature type="helix" evidence="28">
    <location>
        <begin position="90"/>
        <end position="94"/>
    </location>
</feature>
<feature type="strand" evidence="28">
    <location>
        <begin position="100"/>
        <end position="102"/>
    </location>
</feature>
<feature type="strand" evidence="28">
    <location>
        <begin position="105"/>
        <end position="110"/>
    </location>
</feature>
<feature type="helix" evidence="28">
    <location>
        <begin position="114"/>
        <end position="118"/>
    </location>
</feature>
<feature type="strand" evidence="28">
    <location>
        <begin position="123"/>
        <end position="126"/>
    </location>
</feature>
<feature type="strand" evidence="28">
    <location>
        <begin position="129"/>
        <end position="135"/>
    </location>
</feature>
<feature type="helix" evidence="28">
    <location>
        <begin position="138"/>
        <end position="142"/>
    </location>
</feature>
<feature type="strand" evidence="28">
    <location>
        <begin position="148"/>
        <end position="150"/>
    </location>
</feature>
<feature type="strand" evidence="28">
    <location>
        <begin position="153"/>
        <end position="158"/>
    </location>
</feature>
<feature type="helix" evidence="28">
    <location>
        <begin position="162"/>
        <end position="166"/>
    </location>
</feature>
<feature type="strand" evidence="28">
    <location>
        <begin position="172"/>
        <end position="174"/>
    </location>
</feature>
<feature type="strand" evidence="28">
    <location>
        <begin position="177"/>
        <end position="183"/>
    </location>
</feature>
<feature type="helix" evidence="28">
    <location>
        <begin position="188"/>
        <end position="192"/>
    </location>
</feature>
<feature type="helix" evidence="28">
    <location>
        <begin position="195"/>
        <end position="197"/>
    </location>
</feature>
<feature type="strand" evidence="28">
    <location>
        <begin position="202"/>
        <end position="206"/>
    </location>
</feature>
<feature type="strand" evidence="28">
    <location>
        <begin position="209"/>
        <end position="211"/>
    </location>
</feature>
<keyword id="KW-0002">3D-structure</keyword>
<keyword id="KW-0067">ATP-binding</keyword>
<keyword id="KW-1003">Cell membrane</keyword>
<keyword id="KW-1015">Disulfide bond</keyword>
<keyword id="KW-0325">Glycoprotein</keyword>
<keyword id="KW-0418">Kinase</keyword>
<keyword id="KW-0433">Leucine-rich repeat</keyword>
<keyword id="KW-0446">Lipid-binding</keyword>
<keyword id="KW-0472">Membrane</keyword>
<keyword id="KW-0547">Nucleotide-binding</keyword>
<keyword id="KW-0597">Phosphoprotein</keyword>
<keyword id="KW-0675">Receptor</keyword>
<keyword id="KW-1185">Reference proteome</keyword>
<keyword id="KW-0677">Repeat</keyword>
<keyword id="KW-0723">Serine/threonine-protein kinase</keyword>
<keyword id="KW-0732">Signal</keyword>
<keyword id="KW-0808">Transferase</keyword>
<keyword id="KW-0812">Transmembrane</keyword>
<keyword id="KW-1133">Transmembrane helix</keyword>
<protein>
    <recommendedName>
        <fullName evidence="19">Somatic embryogenesis receptor kinase 2</fullName>
        <shortName evidence="19">AtSERK2</shortName>
        <ecNumber evidence="6">2.7.11.1</ecNumber>
    </recommendedName>
    <alternativeName>
        <fullName evidence="19">Somatic embryogenesis receptor-like kinase 2</fullName>
    </alternativeName>
</protein>
<name>SERK2_ARATH</name>